<gene>
    <name type="primary">Gars1</name>
    <name type="synonym">Gars</name>
</gene>
<organism>
    <name type="scientific">Mus musculus</name>
    <name type="common">Mouse</name>
    <dbReference type="NCBI Taxonomy" id="10090"/>
    <lineage>
        <taxon>Eukaryota</taxon>
        <taxon>Metazoa</taxon>
        <taxon>Chordata</taxon>
        <taxon>Craniata</taxon>
        <taxon>Vertebrata</taxon>
        <taxon>Euteleostomi</taxon>
        <taxon>Mammalia</taxon>
        <taxon>Eutheria</taxon>
        <taxon>Euarchontoglires</taxon>
        <taxon>Glires</taxon>
        <taxon>Rodentia</taxon>
        <taxon>Myomorpha</taxon>
        <taxon>Muroidea</taxon>
        <taxon>Muridae</taxon>
        <taxon>Murinae</taxon>
        <taxon>Mus</taxon>
        <taxon>Mus</taxon>
    </lineage>
</organism>
<reference key="1">
    <citation type="journal article" date="2005" name="Science">
        <title>The transcriptional landscape of the mammalian genome.</title>
        <authorList>
            <person name="Carninci P."/>
            <person name="Kasukawa T."/>
            <person name="Katayama S."/>
            <person name="Gough J."/>
            <person name="Frith M.C."/>
            <person name="Maeda N."/>
            <person name="Oyama R."/>
            <person name="Ravasi T."/>
            <person name="Lenhard B."/>
            <person name="Wells C."/>
            <person name="Kodzius R."/>
            <person name="Shimokawa K."/>
            <person name="Bajic V.B."/>
            <person name="Brenner S.E."/>
            <person name="Batalov S."/>
            <person name="Forrest A.R."/>
            <person name="Zavolan M."/>
            <person name="Davis M.J."/>
            <person name="Wilming L.G."/>
            <person name="Aidinis V."/>
            <person name="Allen J.E."/>
            <person name="Ambesi-Impiombato A."/>
            <person name="Apweiler R."/>
            <person name="Aturaliya R.N."/>
            <person name="Bailey T.L."/>
            <person name="Bansal M."/>
            <person name="Baxter L."/>
            <person name="Beisel K.W."/>
            <person name="Bersano T."/>
            <person name="Bono H."/>
            <person name="Chalk A.M."/>
            <person name="Chiu K.P."/>
            <person name="Choudhary V."/>
            <person name="Christoffels A."/>
            <person name="Clutterbuck D.R."/>
            <person name="Crowe M.L."/>
            <person name="Dalla E."/>
            <person name="Dalrymple B.P."/>
            <person name="de Bono B."/>
            <person name="Della Gatta G."/>
            <person name="di Bernardo D."/>
            <person name="Down T."/>
            <person name="Engstrom P."/>
            <person name="Fagiolini M."/>
            <person name="Faulkner G."/>
            <person name="Fletcher C.F."/>
            <person name="Fukushima T."/>
            <person name="Furuno M."/>
            <person name="Futaki S."/>
            <person name="Gariboldi M."/>
            <person name="Georgii-Hemming P."/>
            <person name="Gingeras T.R."/>
            <person name="Gojobori T."/>
            <person name="Green R.E."/>
            <person name="Gustincich S."/>
            <person name="Harbers M."/>
            <person name="Hayashi Y."/>
            <person name="Hensch T.K."/>
            <person name="Hirokawa N."/>
            <person name="Hill D."/>
            <person name="Huminiecki L."/>
            <person name="Iacono M."/>
            <person name="Ikeo K."/>
            <person name="Iwama A."/>
            <person name="Ishikawa T."/>
            <person name="Jakt M."/>
            <person name="Kanapin A."/>
            <person name="Katoh M."/>
            <person name="Kawasawa Y."/>
            <person name="Kelso J."/>
            <person name="Kitamura H."/>
            <person name="Kitano H."/>
            <person name="Kollias G."/>
            <person name="Krishnan S.P."/>
            <person name="Kruger A."/>
            <person name="Kummerfeld S.K."/>
            <person name="Kurochkin I.V."/>
            <person name="Lareau L.F."/>
            <person name="Lazarevic D."/>
            <person name="Lipovich L."/>
            <person name="Liu J."/>
            <person name="Liuni S."/>
            <person name="McWilliam S."/>
            <person name="Madan Babu M."/>
            <person name="Madera M."/>
            <person name="Marchionni L."/>
            <person name="Matsuda H."/>
            <person name="Matsuzawa S."/>
            <person name="Miki H."/>
            <person name="Mignone F."/>
            <person name="Miyake S."/>
            <person name="Morris K."/>
            <person name="Mottagui-Tabar S."/>
            <person name="Mulder N."/>
            <person name="Nakano N."/>
            <person name="Nakauchi H."/>
            <person name="Ng P."/>
            <person name="Nilsson R."/>
            <person name="Nishiguchi S."/>
            <person name="Nishikawa S."/>
            <person name="Nori F."/>
            <person name="Ohara O."/>
            <person name="Okazaki Y."/>
            <person name="Orlando V."/>
            <person name="Pang K.C."/>
            <person name="Pavan W.J."/>
            <person name="Pavesi G."/>
            <person name="Pesole G."/>
            <person name="Petrovsky N."/>
            <person name="Piazza S."/>
            <person name="Reed J."/>
            <person name="Reid J.F."/>
            <person name="Ring B.Z."/>
            <person name="Ringwald M."/>
            <person name="Rost B."/>
            <person name="Ruan Y."/>
            <person name="Salzberg S.L."/>
            <person name="Sandelin A."/>
            <person name="Schneider C."/>
            <person name="Schoenbach C."/>
            <person name="Sekiguchi K."/>
            <person name="Semple C.A."/>
            <person name="Seno S."/>
            <person name="Sessa L."/>
            <person name="Sheng Y."/>
            <person name="Shibata Y."/>
            <person name="Shimada H."/>
            <person name="Shimada K."/>
            <person name="Silva D."/>
            <person name="Sinclair B."/>
            <person name="Sperling S."/>
            <person name="Stupka E."/>
            <person name="Sugiura K."/>
            <person name="Sultana R."/>
            <person name="Takenaka Y."/>
            <person name="Taki K."/>
            <person name="Tammoja K."/>
            <person name="Tan S.L."/>
            <person name="Tang S."/>
            <person name="Taylor M.S."/>
            <person name="Tegner J."/>
            <person name="Teichmann S.A."/>
            <person name="Ueda H.R."/>
            <person name="van Nimwegen E."/>
            <person name="Verardo R."/>
            <person name="Wei C.L."/>
            <person name="Yagi K."/>
            <person name="Yamanishi H."/>
            <person name="Zabarovsky E."/>
            <person name="Zhu S."/>
            <person name="Zimmer A."/>
            <person name="Hide W."/>
            <person name="Bult C."/>
            <person name="Grimmond S.M."/>
            <person name="Teasdale R.D."/>
            <person name="Liu E.T."/>
            <person name="Brusic V."/>
            <person name="Quackenbush J."/>
            <person name="Wahlestedt C."/>
            <person name="Mattick J.S."/>
            <person name="Hume D.A."/>
            <person name="Kai C."/>
            <person name="Sasaki D."/>
            <person name="Tomaru Y."/>
            <person name="Fukuda S."/>
            <person name="Kanamori-Katayama M."/>
            <person name="Suzuki M."/>
            <person name="Aoki J."/>
            <person name="Arakawa T."/>
            <person name="Iida J."/>
            <person name="Imamura K."/>
            <person name="Itoh M."/>
            <person name="Kato T."/>
            <person name="Kawaji H."/>
            <person name="Kawagashira N."/>
            <person name="Kawashima T."/>
            <person name="Kojima M."/>
            <person name="Kondo S."/>
            <person name="Konno H."/>
            <person name="Nakano K."/>
            <person name="Ninomiya N."/>
            <person name="Nishio T."/>
            <person name="Okada M."/>
            <person name="Plessy C."/>
            <person name="Shibata K."/>
            <person name="Shiraki T."/>
            <person name="Suzuki S."/>
            <person name="Tagami M."/>
            <person name="Waki K."/>
            <person name="Watahiki A."/>
            <person name="Okamura-Oho Y."/>
            <person name="Suzuki H."/>
            <person name="Kawai J."/>
            <person name="Hayashizaki Y."/>
        </authorList>
    </citation>
    <scope>NUCLEOTIDE SEQUENCE [LARGE SCALE MRNA]</scope>
    <source>
        <strain>BALB/cJ</strain>
        <strain>C57BL/6J</strain>
        <tissue>Embryo</tissue>
        <tissue>Lung</tissue>
    </source>
</reference>
<reference key="2">
    <citation type="journal article" date="2004" name="Genome Res.">
        <title>The status, quality, and expansion of the NIH full-length cDNA project: the Mammalian Gene Collection (MGC).</title>
        <authorList>
            <consortium name="The MGC Project Team"/>
        </authorList>
    </citation>
    <scope>NUCLEOTIDE SEQUENCE [LARGE SCALE MRNA]</scope>
    <source>
        <tissue>Salivary gland</tissue>
    </source>
</reference>
<reference key="3">
    <citation type="submission" date="2007-03" db="UniProtKB">
        <authorList>
            <person name="Lubec G."/>
            <person name="Klug S."/>
        </authorList>
    </citation>
    <scope>PROTEIN SEQUENCE OF 309-321; 554-573 AND 593-605</scope>
    <scope>IDENTIFICATION BY MASS SPECTROMETRY</scope>
    <source>
        <tissue>Hippocampus</tissue>
    </source>
</reference>
<reference key="4">
    <citation type="journal article" date="2007" name="J. Immunol.">
        <title>Quantitative time-resolved phosphoproteomic analysis of mast cell signaling.</title>
        <authorList>
            <person name="Cao L."/>
            <person name="Yu K."/>
            <person name="Banh C."/>
            <person name="Nguyen V."/>
            <person name="Ritz A."/>
            <person name="Raphael B.J."/>
            <person name="Kawakami Y."/>
            <person name="Kawakami T."/>
            <person name="Salomon A.R."/>
        </authorList>
    </citation>
    <scope>PHOSPHORYLATION [LARGE SCALE ANALYSIS] AT TYR-443</scope>
    <scope>IDENTIFICATION BY MASS SPECTROMETRY [LARGE SCALE ANALYSIS]</scope>
    <source>
        <tissue>Mast cell</tissue>
    </source>
</reference>
<reference key="5">
    <citation type="journal article" date="2008" name="Cell">
        <title>A mitochondrial protein compendium elucidates complex I disease biology.</title>
        <authorList>
            <person name="Pagliarini D.J."/>
            <person name="Calvo S.E."/>
            <person name="Chang B."/>
            <person name="Sheth S.A."/>
            <person name="Vafai S.B."/>
            <person name="Ong S.E."/>
            <person name="Walford G.A."/>
            <person name="Sugiana C."/>
            <person name="Boneh A."/>
            <person name="Chen W.K."/>
            <person name="Hill D.E."/>
            <person name="Vidal M."/>
            <person name="Evans J.G."/>
            <person name="Thorburn D.R."/>
            <person name="Carr S.A."/>
            <person name="Mootha V.K."/>
        </authorList>
    </citation>
    <scope>SUBCELLULAR LOCATION</scope>
</reference>
<reference key="6">
    <citation type="journal article" date="2010" name="Cell">
        <title>A tissue-specific atlas of mouse protein phosphorylation and expression.</title>
        <authorList>
            <person name="Huttlin E.L."/>
            <person name="Jedrychowski M.P."/>
            <person name="Elias J.E."/>
            <person name="Goswami T."/>
            <person name="Rad R."/>
            <person name="Beausoleil S.A."/>
            <person name="Villen J."/>
            <person name="Haas W."/>
            <person name="Sowa M.E."/>
            <person name="Gygi S.P."/>
        </authorList>
    </citation>
    <scope>PHOSPHORYLATION [LARGE SCALE ANALYSIS] AT SER-690</scope>
    <scope>IDENTIFICATION BY MASS SPECTROMETRY [LARGE SCALE ANALYSIS]</scope>
    <source>
        <tissue>Brain</tissue>
        <tissue>Brown adipose tissue</tissue>
        <tissue>Heart</tissue>
        <tissue>Kidney</tissue>
        <tissue>Liver</tissue>
        <tissue>Lung</tissue>
        <tissue>Pancreas</tissue>
        <tissue>Spleen</tissue>
        <tissue>Testis</tissue>
    </source>
</reference>
<reference key="7">
    <citation type="journal article" date="2013" name="Mol. Cell">
        <title>SIRT5-mediated lysine desuccinylation impacts diverse metabolic pathways.</title>
        <authorList>
            <person name="Park J."/>
            <person name="Chen Y."/>
            <person name="Tishkoff D.X."/>
            <person name="Peng C."/>
            <person name="Tan M."/>
            <person name="Dai L."/>
            <person name="Xie Z."/>
            <person name="Zhang Y."/>
            <person name="Zwaans B.M."/>
            <person name="Skinner M.E."/>
            <person name="Lombard D.B."/>
            <person name="Zhao Y."/>
        </authorList>
    </citation>
    <scope>IDENTIFICATION BY MASS SPECTROMETRY [LARGE SCALE ANALYSIS]</scope>
    <source>
        <tissue>Embryonic fibroblast</tissue>
    </source>
</reference>
<reference key="8">
    <citation type="journal article" date="2006" name="Neuron">
        <title>An active dominant mutation of glycyl-tRNA synthetase causes neuropathy in a Charcot-Marie-Tooth 2D mouse model.</title>
        <authorList>
            <person name="Seburn K.L."/>
            <person name="Nangle L.A."/>
            <person name="Cox G.A."/>
            <person name="Schimmel P."/>
            <person name="Burgess R.W."/>
        </authorList>
    </citation>
    <scope>VARIANT PRO-278 DELINS TYR-LYS</scope>
</reference>
<reference key="9">
    <citation type="journal article" date="2015" name="Nature">
        <title>CMT2D neuropathy is linked to the neomorphic binding activity of glycyl-tRNA synthetase.</title>
        <authorList>
            <person name="He W."/>
            <person name="Bai G."/>
            <person name="Zhou H."/>
            <person name="Wei N."/>
            <person name="White N.M."/>
            <person name="Lauer J."/>
            <person name="Liu H."/>
            <person name="Shi Y."/>
            <person name="Dumitru C.D."/>
            <person name="Lettieri K."/>
            <person name="Shubayev V."/>
            <person name="Jordanova A."/>
            <person name="Guergueltcheva V."/>
            <person name="Griffin P.R."/>
            <person name="Burgess R.W."/>
            <person name="Pfaff S.L."/>
            <person name="Yang X.L."/>
        </authorList>
    </citation>
    <scope>CHARACTERIZATION OF VARIANT PRO-278 DELINS TYR-LYS</scope>
    <scope>SUBCELLULAR LOCATION</scope>
</reference>
<reference key="10">
    <citation type="journal article" date="2016" name="Nature">
        <title>Corrigendum: CMT2D neuropathy is linked to the neomorphic binding activity of glycyl-tRNA synthetase.</title>
        <authorList>
            <person name="He W."/>
            <person name="Bai G."/>
            <person name="Zhou H."/>
            <person name="Wei N."/>
            <person name="White N.M."/>
            <person name="Lauer J."/>
            <person name="Liu H."/>
            <person name="Shi Y."/>
            <person name="Dan Dumitru C."/>
            <person name="Lettieri K."/>
            <person name="Shubayev V."/>
            <person name="Jordanova A."/>
            <person name="Guergueltcheva V."/>
            <person name="Griffin P.R."/>
            <person name="Burgess R.W."/>
            <person name="Pfaff S.L."/>
            <person name="Yang X.L."/>
        </authorList>
    </citation>
    <scope>ERRATUM OF PUBMED:26503042</scope>
</reference>
<proteinExistence type="evidence at protein level"/>
<protein>
    <recommendedName>
        <fullName>Glycine--tRNA ligase</fullName>
        <ecNumber evidence="1">6.1.1.14</ecNumber>
    </recommendedName>
    <alternativeName>
        <fullName>Diadenosine tetraphosphate synthetase</fullName>
        <shortName>Ap4A synthetase</shortName>
        <ecNumber evidence="1">2.7.7.-</ecNumber>
    </alternativeName>
    <alternativeName>
        <fullName evidence="1">Glycyl-tRNA synthetase 1</fullName>
        <shortName>GlyRS</shortName>
    </alternativeName>
</protein>
<sequence length="729" mass="81878">MPCLLPSLLRATRAALPLLSPPRVVAASASQRLLSAPAQPAASRSSMDSAEELLAPLRLAVRQQGDFVRKLKEDKAPQVDVDRAVAELKARKRVLEAKELALQPKDDIVDRAKMEDTLKRRFFYDQAFAIYGGVSGLYDFGPVGCALKNNIIQAWRQHFIQEEQILEIDCTMLTPEPVLKTSGHVDKFADFMVKDVKNGECFRADHLLKAHLQKLMSDKKCSAEKKSEMESVLAQLDNYGQQELADLFVNYNVKSPTTGNDLSPPVPFNLMFQTFIGPGGNMPGYLRPETAQGIFLNFKRLLEFNQGKLPFAAAQIGNSFRNEISPRSGLIRVREFTMAEIEHFVDPTEKDHPKFQSVADLCLYLYSAKAQVTGQSARKMRLGDAVEQGVINNSVLGYFIGRIYLYLTKVGISPDKLRFRQHMENEMAHYACDCWDAESKTSYGWIEIVGCADRSCYDLSCHARATKVPLVAEKPLKEPKTVNVVQFEPNKGAVGKAYKKDAKLVLEYLSACDECYISEMELLLSEKGEFTIETEGKTFQLTKDMVSVKRFQKTLHVEEVVPSVIEPSFGLGRIMYTILEHTFHVREGDEQRTFFSFPAVVAPFKCSVLPLSQNQEFMPFVKELSEALTRNGVSHKVDDSSGSIGRRYARTDEIGVAFGITIDFDTVNKTPHTATLRDRDSMRQIRAEVSELPNVVRDLANGNITWADVEARYPLFEGQETGKKETVEE</sequence>
<evidence type="ECO:0000250" key="1">
    <source>
        <dbReference type="UniProtKB" id="P41250"/>
    </source>
</evidence>
<evidence type="ECO:0000255" key="2"/>
<evidence type="ECO:0000255" key="3">
    <source>
        <dbReference type="PROSITE-ProRule" id="PRU00531"/>
    </source>
</evidence>
<evidence type="ECO:0000269" key="4">
    <source>
    </source>
</evidence>
<evidence type="ECO:0000269" key="5">
    <source>
    </source>
</evidence>
<evidence type="ECO:0000269" key="6">
    <source>
    </source>
</evidence>
<evidence type="ECO:0000305" key="7"/>
<evidence type="ECO:0000305" key="8">
    <source>
    </source>
</evidence>
<evidence type="ECO:0007744" key="9">
    <source>
    </source>
</evidence>
<evidence type="ECO:0007744" key="10">
    <source>
    </source>
</evidence>
<dbReference type="EC" id="6.1.1.14" evidence="1"/>
<dbReference type="EC" id="2.7.7.-" evidence="1"/>
<dbReference type="EMBL" id="AK146238">
    <property type="protein sequence ID" value="BAE27003.1"/>
    <property type="molecule type" value="mRNA"/>
</dbReference>
<dbReference type="EMBL" id="AK165857">
    <property type="protein sequence ID" value="BAE38417.1"/>
    <property type="molecule type" value="mRNA"/>
</dbReference>
<dbReference type="EMBL" id="BC021747">
    <property type="protein sequence ID" value="AAH21747.1"/>
    <property type="molecule type" value="mRNA"/>
</dbReference>
<dbReference type="CCDS" id="CCDS39492.1"/>
<dbReference type="RefSeq" id="NP_851009.2">
    <property type="nucleotide sequence ID" value="NM_180678.3"/>
</dbReference>
<dbReference type="SMR" id="Q9CZD3"/>
<dbReference type="BioGRID" id="237263">
    <property type="interactions" value="27"/>
</dbReference>
<dbReference type="DIP" id="DIP-60956N"/>
<dbReference type="FunCoup" id="Q9CZD3">
    <property type="interactions" value="2865"/>
</dbReference>
<dbReference type="IntAct" id="Q9CZD3">
    <property type="interactions" value="2"/>
</dbReference>
<dbReference type="MINT" id="Q9CZD3"/>
<dbReference type="STRING" id="10090.ENSMUSP00000003572"/>
<dbReference type="MoonProt" id="Q9CZD3"/>
<dbReference type="GlyGen" id="Q9CZD3">
    <property type="glycosylation" value="1 site, 1 O-linked glycan (1 site)"/>
</dbReference>
<dbReference type="iPTMnet" id="Q9CZD3"/>
<dbReference type="PhosphoSitePlus" id="Q9CZD3"/>
<dbReference type="SwissPalm" id="Q9CZD3"/>
<dbReference type="REPRODUCTION-2DPAGE" id="Q9CZD3"/>
<dbReference type="jPOST" id="Q9CZD3"/>
<dbReference type="PaxDb" id="10090-ENSMUSP00000003572"/>
<dbReference type="PeptideAtlas" id="Q9CZD3"/>
<dbReference type="ProteomicsDB" id="267560"/>
<dbReference type="Pumba" id="Q9CZD3"/>
<dbReference type="Antibodypedia" id="6744">
    <property type="antibodies" value="376 antibodies from 32 providers"/>
</dbReference>
<dbReference type="DNASU" id="353172"/>
<dbReference type="Ensembl" id="ENSMUST00000003572.10">
    <property type="protein sequence ID" value="ENSMUSP00000003572.9"/>
    <property type="gene ID" value="ENSMUSG00000029777.11"/>
</dbReference>
<dbReference type="GeneID" id="353172"/>
<dbReference type="KEGG" id="mmu:353172"/>
<dbReference type="UCSC" id="uc009cai.1">
    <property type="organism name" value="mouse"/>
</dbReference>
<dbReference type="AGR" id="MGI:2449057"/>
<dbReference type="CTD" id="2617"/>
<dbReference type="MGI" id="MGI:2449057">
    <property type="gene designation" value="Gars1"/>
</dbReference>
<dbReference type="VEuPathDB" id="HostDB:ENSMUSG00000029777"/>
<dbReference type="eggNOG" id="KOG2298">
    <property type="taxonomic scope" value="Eukaryota"/>
</dbReference>
<dbReference type="GeneTree" id="ENSGT00940000153759"/>
<dbReference type="HOGENOM" id="CLU_015515_1_0_1"/>
<dbReference type="InParanoid" id="Q9CZD3"/>
<dbReference type="OMA" id="MEMQYFV"/>
<dbReference type="OrthoDB" id="57698at2759"/>
<dbReference type="PhylomeDB" id="Q9CZD3"/>
<dbReference type="TreeFam" id="TF343504"/>
<dbReference type="BioGRID-ORCS" id="353172">
    <property type="hits" value="26 hits in 84 CRISPR screens"/>
</dbReference>
<dbReference type="ChiTaRS" id="Gars">
    <property type="organism name" value="mouse"/>
</dbReference>
<dbReference type="PRO" id="PR:Q9CZD3"/>
<dbReference type="Proteomes" id="UP000000589">
    <property type="component" value="Chromosome 6"/>
</dbReference>
<dbReference type="RNAct" id="Q9CZD3">
    <property type="molecule type" value="protein"/>
</dbReference>
<dbReference type="Bgee" id="ENSMUSG00000029777">
    <property type="expression patterns" value="Expressed in floor plate of midbrain and 276 other cell types or tissues"/>
</dbReference>
<dbReference type="GO" id="GO:0030424">
    <property type="term" value="C:axon"/>
    <property type="evidence" value="ECO:0000250"/>
    <property type="project" value="UniProtKB"/>
</dbReference>
<dbReference type="GO" id="GO:0005829">
    <property type="term" value="C:cytosol"/>
    <property type="evidence" value="ECO:0007669"/>
    <property type="project" value="Ensembl"/>
</dbReference>
<dbReference type="GO" id="GO:0070062">
    <property type="term" value="C:extracellular exosome"/>
    <property type="evidence" value="ECO:0000314"/>
    <property type="project" value="UniProtKB"/>
</dbReference>
<dbReference type="GO" id="GO:0005739">
    <property type="term" value="C:mitochondrion"/>
    <property type="evidence" value="ECO:0007005"/>
    <property type="project" value="MGI"/>
</dbReference>
<dbReference type="GO" id="GO:0030141">
    <property type="term" value="C:secretory granule"/>
    <property type="evidence" value="ECO:0000314"/>
    <property type="project" value="MGI"/>
</dbReference>
<dbReference type="GO" id="GO:0005524">
    <property type="term" value="F:ATP binding"/>
    <property type="evidence" value="ECO:0007669"/>
    <property type="project" value="UniProtKB-KW"/>
</dbReference>
<dbReference type="GO" id="GO:0141192">
    <property type="term" value="F:ATP:ATP adenylyltransferase activity"/>
    <property type="evidence" value="ECO:0007669"/>
    <property type="project" value="RHEA"/>
</dbReference>
<dbReference type="GO" id="GO:0004081">
    <property type="term" value="F:bis(5'-nucleosyl)-tetraphosphatase (asymmetrical) activity"/>
    <property type="evidence" value="ECO:0000250"/>
    <property type="project" value="UniProtKB"/>
</dbReference>
<dbReference type="GO" id="GO:0004820">
    <property type="term" value="F:glycine-tRNA ligase activity"/>
    <property type="evidence" value="ECO:0000315"/>
    <property type="project" value="MGI"/>
</dbReference>
<dbReference type="GO" id="GO:0042802">
    <property type="term" value="F:identical protein binding"/>
    <property type="evidence" value="ECO:0007669"/>
    <property type="project" value="Ensembl"/>
</dbReference>
<dbReference type="GO" id="GO:0046983">
    <property type="term" value="F:protein dimerization activity"/>
    <property type="evidence" value="ECO:0000250"/>
    <property type="project" value="UniProtKB"/>
</dbReference>
<dbReference type="GO" id="GO:0015966">
    <property type="term" value="P:diadenosine tetraphosphate biosynthetic process"/>
    <property type="evidence" value="ECO:0000250"/>
    <property type="project" value="UniProtKB"/>
</dbReference>
<dbReference type="GO" id="GO:0006426">
    <property type="term" value="P:glycyl-tRNA aminoacylation"/>
    <property type="evidence" value="ECO:0000315"/>
    <property type="project" value="MGI"/>
</dbReference>
<dbReference type="GO" id="GO:0006418">
    <property type="term" value="P:tRNA aminoacylation for protein translation"/>
    <property type="evidence" value="ECO:0000250"/>
    <property type="project" value="UniProtKB"/>
</dbReference>
<dbReference type="CDD" id="cd00774">
    <property type="entry name" value="GlyRS-like_core"/>
    <property type="match status" value="1"/>
</dbReference>
<dbReference type="CDD" id="cd00858">
    <property type="entry name" value="GlyRS_anticodon"/>
    <property type="match status" value="1"/>
</dbReference>
<dbReference type="CDD" id="cd00935">
    <property type="entry name" value="GlyRS_RNA"/>
    <property type="match status" value="1"/>
</dbReference>
<dbReference type="FunFam" id="3.30.40.230:FF:000001">
    <property type="entry name" value="Glycine--tRNA ligase"/>
    <property type="match status" value="1"/>
</dbReference>
<dbReference type="FunFam" id="3.30.720.200:FF:000001">
    <property type="entry name" value="Glycine--tRNA ligase 2"/>
    <property type="match status" value="1"/>
</dbReference>
<dbReference type="FunFam" id="3.40.50.800:FF:000004">
    <property type="entry name" value="Glycine--tRNA ligase 2"/>
    <property type="match status" value="1"/>
</dbReference>
<dbReference type="FunFam" id="1.10.287.10:FF:000007">
    <property type="entry name" value="Glycyl-tRNA synthetase"/>
    <property type="match status" value="1"/>
</dbReference>
<dbReference type="FunFam" id="3.30.930.10:FF:000158">
    <property type="entry name" value="Glycyl-tRNA synthetase"/>
    <property type="match status" value="1"/>
</dbReference>
<dbReference type="FunFam" id="3.30.930.10:FF:000010">
    <property type="entry name" value="Glycyl-tRNA synthetase 1"/>
    <property type="match status" value="1"/>
</dbReference>
<dbReference type="Gene3D" id="3.30.40.230">
    <property type="match status" value="1"/>
</dbReference>
<dbReference type="Gene3D" id="3.30.720.200">
    <property type="match status" value="1"/>
</dbReference>
<dbReference type="Gene3D" id="3.40.50.800">
    <property type="entry name" value="Anticodon-binding domain"/>
    <property type="match status" value="1"/>
</dbReference>
<dbReference type="Gene3D" id="3.30.930.10">
    <property type="entry name" value="Bira Bifunctional Protein, Domain 2"/>
    <property type="match status" value="1"/>
</dbReference>
<dbReference type="Gene3D" id="1.10.287.10">
    <property type="entry name" value="S15/NS1, RNA-binding"/>
    <property type="match status" value="1"/>
</dbReference>
<dbReference type="InterPro" id="IPR002314">
    <property type="entry name" value="aa-tRNA-synt_IIb"/>
</dbReference>
<dbReference type="InterPro" id="IPR006195">
    <property type="entry name" value="aa-tRNA-synth_II"/>
</dbReference>
<dbReference type="InterPro" id="IPR045864">
    <property type="entry name" value="aa-tRNA-synth_II/BPL/LPL"/>
</dbReference>
<dbReference type="InterPro" id="IPR004154">
    <property type="entry name" value="Anticodon-bd"/>
</dbReference>
<dbReference type="InterPro" id="IPR036621">
    <property type="entry name" value="Anticodon-bd_dom_sf"/>
</dbReference>
<dbReference type="InterPro" id="IPR027031">
    <property type="entry name" value="Gly-tRNA_synthase/POLG2"/>
</dbReference>
<dbReference type="InterPro" id="IPR033731">
    <property type="entry name" value="GlyRS-like_core"/>
</dbReference>
<dbReference type="InterPro" id="IPR002315">
    <property type="entry name" value="tRNA-synt_gly"/>
</dbReference>
<dbReference type="InterPro" id="IPR009068">
    <property type="entry name" value="uS15_NS1_RNA-bd_sf"/>
</dbReference>
<dbReference type="InterPro" id="IPR000738">
    <property type="entry name" value="WHEP-TRS_dom"/>
</dbReference>
<dbReference type="NCBIfam" id="TIGR00389">
    <property type="entry name" value="glyS_dimeric"/>
    <property type="match status" value="1"/>
</dbReference>
<dbReference type="NCBIfam" id="NF003211">
    <property type="entry name" value="PRK04173.1"/>
    <property type="match status" value="1"/>
</dbReference>
<dbReference type="PANTHER" id="PTHR10745:SF0">
    <property type="entry name" value="GLYCINE--TRNA LIGASE"/>
    <property type="match status" value="1"/>
</dbReference>
<dbReference type="PANTHER" id="PTHR10745">
    <property type="entry name" value="GLYCYL-TRNA SYNTHETASE/DNA POLYMERASE SUBUNIT GAMMA-2"/>
    <property type="match status" value="1"/>
</dbReference>
<dbReference type="Pfam" id="PF03129">
    <property type="entry name" value="HGTP_anticodon"/>
    <property type="match status" value="1"/>
</dbReference>
<dbReference type="Pfam" id="PF00587">
    <property type="entry name" value="tRNA-synt_2b"/>
    <property type="match status" value="1"/>
</dbReference>
<dbReference type="Pfam" id="PF00458">
    <property type="entry name" value="WHEP-TRS"/>
    <property type="match status" value="1"/>
</dbReference>
<dbReference type="PRINTS" id="PR01043">
    <property type="entry name" value="TRNASYNTHGLY"/>
</dbReference>
<dbReference type="SMART" id="SM00991">
    <property type="entry name" value="WHEP-TRS"/>
    <property type="match status" value="1"/>
</dbReference>
<dbReference type="SUPFAM" id="SSF52954">
    <property type="entry name" value="Class II aaRS ABD-related"/>
    <property type="match status" value="1"/>
</dbReference>
<dbReference type="SUPFAM" id="SSF55681">
    <property type="entry name" value="Class II aaRS and biotin synthetases"/>
    <property type="match status" value="1"/>
</dbReference>
<dbReference type="SUPFAM" id="SSF47060">
    <property type="entry name" value="S15/NS1 RNA-binding domain"/>
    <property type="match status" value="1"/>
</dbReference>
<dbReference type="PROSITE" id="PS50862">
    <property type="entry name" value="AA_TRNA_LIGASE_II"/>
    <property type="match status" value="1"/>
</dbReference>
<dbReference type="PROSITE" id="PS00762">
    <property type="entry name" value="WHEP_TRS_1"/>
    <property type="match status" value="1"/>
</dbReference>
<dbReference type="PROSITE" id="PS51185">
    <property type="entry name" value="WHEP_TRS_2"/>
    <property type="match status" value="1"/>
</dbReference>
<comment type="function">
    <text evidence="1">Catalyzes the ATP-dependent ligation of glycine to the 3'-end of its cognate tRNA, via the formation of an aminoacyl-adenylate intermediate (Gly-AMP). Also produces diadenosine tetraphosphate (Ap4A), a universal pleiotropic signaling molecule needed for cell regulation pathways, by direct condensation of 2 ATPs. Thereby, may play a special role in Ap4A homeostasis.</text>
</comment>
<comment type="catalytic activity">
    <reaction evidence="1">
        <text>tRNA(Gly) + glycine + ATP = glycyl-tRNA(Gly) + AMP + diphosphate</text>
        <dbReference type="Rhea" id="RHEA:16013"/>
        <dbReference type="Rhea" id="RHEA-COMP:9664"/>
        <dbReference type="Rhea" id="RHEA-COMP:9683"/>
        <dbReference type="ChEBI" id="CHEBI:30616"/>
        <dbReference type="ChEBI" id="CHEBI:33019"/>
        <dbReference type="ChEBI" id="CHEBI:57305"/>
        <dbReference type="ChEBI" id="CHEBI:78442"/>
        <dbReference type="ChEBI" id="CHEBI:78522"/>
        <dbReference type="ChEBI" id="CHEBI:456215"/>
        <dbReference type="EC" id="6.1.1.14"/>
    </reaction>
    <physiologicalReaction direction="left-to-right" evidence="1">
        <dbReference type="Rhea" id="RHEA:16014"/>
    </physiologicalReaction>
</comment>
<comment type="catalytic activity">
    <reaction evidence="1">
        <text>2 ATP + H(+) = P(1),P(4)-bis(5'-adenosyl) tetraphosphate + diphosphate</text>
        <dbReference type="Rhea" id="RHEA:34935"/>
        <dbReference type="ChEBI" id="CHEBI:15378"/>
        <dbReference type="ChEBI" id="CHEBI:30616"/>
        <dbReference type="ChEBI" id="CHEBI:33019"/>
        <dbReference type="ChEBI" id="CHEBI:58141"/>
    </reaction>
    <physiologicalReaction direction="left-to-right" evidence="1">
        <dbReference type="Rhea" id="RHEA:34936"/>
    </physiologicalReaction>
</comment>
<comment type="subunit">
    <text evidence="1">Homodimer.</text>
</comment>
<comment type="interaction">
    <interactant intactId="EBI-8321941">
        <id>Q9CZD3</id>
    </interactant>
    <interactant intactId="EBI-724143">
        <id>P41250</id>
        <label>GARS1</label>
    </interactant>
    <organismsDiffer>true</organismsDiffer>
    <experiments>2</experiments>
</comment>
<comment type="subcellular location">
    <subcellularLocation>
        <location evidence="1">Cytoplasm</location>
    </subcellularLocation>
    <subcellularLocation>
        <location evidence="5">Mitochondrion</location>
    </subcellularLocation>
    <subcellularLocation>
        <location evidence="1">Cell projection</location>
        <location evidence="1">Axon</location>
    </subcellularLocation>
    <subcellularLocation>
        <location evidence="6">Secreted</location>
    </subcellularLocation>
    <subcellularLocation>
        <location evidence="8">Secreted</location>
        <location evidence="8">Extracellular exosome</location>
    </subcellularLocation>
    <text evidence="1 6">Associated with granules in cultured neuron cells (By similarity). Secreted by motor neuron and differentiated myotube cell lines, but not by undifferentiated myoblasts, possibly through the exosome pathway (PubMed:26503042).</text>
</comment>
<comment type="disease">
    <text evidence="4">Mice (Nmf249) heterozygous for the P278YK variant are used a model for human Charcot-Marie-Tooth 2D (CMT2D), which is caused by dominant GARS mutations. They exhibit reduced amplitudes of muscle compound action potentials and a large reduction in sciatic nerve conduction velocity in the absence of demyelination or remyelination, resulting from an age-related decrease in the number of large myelinated motor and sensory axons. The loss of myelinated axons is length-dependent, and there is a length- and time-dependent decrease in motor innervation of distal versus proximal muscles. Most of the axonal loss occurs by 1 month of age and mice that survive this period can be long-lived. At the molecular level, the P278YK mutation creates a neomorphic binding activity leading to the interaction of the variant with NRP1. This interaction competes out VEGFA binding and inhibits VEGFA-NRP1 signling which is essential for motor neuron survival. VEGFA, but not GDNF treatment significantly ameliorates the loss of motor function in mutant mice.</text>
</comment>
<comment type="similarity">
    <text evidence="7">Belongs to the class-II aminoacyl-tRNA synthetase family.</text>
</comment>
<feature type="transit peptide" description="Mitochondrion" evidence="2">
    <location>
        <begin position="1"/>
        <end position="33"/>
    </location>
</feature>
<feature type="chain" id="PRO_0000072999" description="Glycine--tRNA ligase" evidence="2">
    <location>
        <begin position="34"/>
        <end position="729"/>
    </location>
</feature>
<feature type="domain" description="WHEP-TRS" evidence="3">
    <location>
        <begin position="53"/>
        <end position="109"/>
    </location>
</feature>
<feature type="binding site" evidence="1">
    <location>
        <position position="289"/>
    </location>
    <ligand>
        <name>glycine</name>
        <dbReference type="ChEBI" id="CHEBI:57305"/>
    </ligand>
</feature>
<feature type="binding site" evidence="1">
    <location>
        <begin position="321"/>
        <end position="323"/>
    </location>
    <ligand>
        <name>ATP</name>
        <dbReference type="ChEBI" id="CHEBI:30616"/>
    </ligand>
</feature>
<feature type="binding site" evidence="1">
    <location>
        <begin position="332"/>
        <end position="333"/>
    </location>
    <ligand>
        <name>ATP</name>
        <dbReference type="ChEBI" id="CHEBI:30616"/>
    </ligand>
</feature>
<feature type="binding site" evidence="1">
    <location>
        <position position="340"/>
    </location>
    <ligand>
        <name>glycine</name>
        <dbReference type="ChEBI" id="CHEBI:57305"/>
    </ligand>
</feature>
<feature type="binding site" evidence="1">
    <location>
        <begin position="447"/>
        <end position="448"/>
    </location>
    <ligand>
        <name>ATP</name>
        <dbReference type="ChEBI" id="CHEBI:30616"/>
    </ligand>
</feature>
<feature type="binding site" evidence="1">
    <location>
        <begin position="566"/>
        <end position="568"/>
    </location>
    <ligand>
        <name>glycine</name>
        <dbReference type="ChEBI" id="CHEBI:57305"/>
    </ligand>
</feature>
<feature type="binding site" evidence="1">
    <location>
        <position position="573"/>
    </location>
    <ligand>
        <name>ATP</name>
        <dbReference type="ChEBI" id="CHEBI:30616"/>
    </ligand>
</feature>
<feature type="modified residue" description="N6-acetyllysine" evidence="1">
    <location>
        <position position="194"/>
    </location>
</feature>
<feature type="modified residue" description="Phosphotyrosine" evidence="9">
    <location>
        <position position="443"/>
    </location>
</feature>
<feature type="modified residue" description="N6-acetyllysine" evidence="1">
    <location>
        <position position="491"/>
    </location>
</feature>
<feature type="modified residue" description="Phosphoserine" evidence="10">
    <location>
        <position position="690"/>
    </location>
</feature>
<feature type="modified residue" description="Phosphothreonine" evidence="1">
    <location>
        <position position="726"/>
    </location>
</feature>
<feature type="sequence variant" description="Found in Nmf249 mice, a Charcot-Marie-Tooth 2D model; involved in neuromuscular dysfunction; contrary to the wild-type protein, strongly interacts with NRP1 and competes with VEGFA for NRP1-binding; no effect on subcellular location." evidence="4 6">
    <original>P</original>
    <variation>YK</variation>
    <location>
        <position position="278"/>
    </location>
</feature>
<feature type="sequence conflict" description="In Ref. 1; BAE38417." evidence="7" ref="1">
    <original>L</original>
    <variation>V</variation>
    <location>
        <position position="5"/>
    </location>
</feature>
<feature type="sequence conflict" description="In Ref. 1; BAE27003." evidence="7" ref="1">
    <original>H</original>
    <variation>N</variation>
    <location>
        <position position="584"/>
    </location>
</feature>
<feature type="sequence conflict" description="In Ref. 1; BAE27003." evidence="7" ref="1">
    <original>F</original>
    <variation>L</variation>
    <location>
        <position position="597"/>
    </location>
</feature>
<feature type="sequence conflict" description="In Ref. 2; AAH21747." evidence="7" ref="2">
    <original>N</original>
    <variation>S</variation>
    <location>
        <position position="694"/>
    </location>
</feature>
<accession>Q9CZD3</accession>
<accession>Q3TMM4</accession>
<accession>Q3UK01</accession>
<accession>Q8VC67</accession>
<name>GARS_MOUSE</name>
<keyword id="KW-0007">Acetylation</keyword>
<keyword id="KW-0030">Aminoacyl-tRNA synthetase</keyword>
<keyword id="KW-0067">ATP-binding</keyword>
<keyword id="KW-0966">Cell projection</keyword>
<keyword id="KW-0963">Cytoplasm</keyword>
<keyword id="KW-0903">Direct protein sequencing</keyword>
<keyword id="KW-0225">Disease variant</keyword>
<keyword id="KW-0378">Hydrolase</keyword>
<keyword id="KW-0436">Ligase</keyword>
<keyword id="KW-0496">Mitochondrion</keyword>
<keyword id="KW-0547">Nucleotide-binding</keyword>
<keyword id="KW-0597">Phosphoprotein</keyword>
<keyword id="KW-0648">Protein biosynthesis</keyword>
<keyword id="KW-1185">Reference proteome</keyword>
<keyword id="KW-0964">Secreted</keyword>
<keyword id="KW-0808">Transferase</keyword>
<keyword id="KW-0809">Transit peptide</keyword>